<feature type="signal peptide" evidence="3">
    <location>
        <begin position="1"/>
        <end position="30"/>
    </location>
</feature>
<feature type="chain" id="PRO_0000287878" description="Transmembrane protein 81">
    <location>
        <begin position="31"/>
        <end position="262"/>
    </location>
</feature>
<feature type="topological domain" description="Extracellular" evidence="3">
    <location>
        <begin position="31"/>
        <end position="225"/>
    </location>
</feature>
<feature type="transmembrane region" description="Helical" evidence="3">
    <location>
        <begin position="226"/>
        <end position="246"/>
    </location>
</feature>
<feature type="topological domain" description="Cytoplasmic" evidence="3">
    <location>
        <begin position="247"/>
        <end position="262"/>
    </location>
</feature>
<feature type="domain" description="Ig-like">
    <location>
        <begin position="83"/>
        <end position="171"/>
    </location>
</feature>
<feature type="glycosylation site" description="N-linked (GlcNAc...) asparagine" evidence="3">
    <location>
        <position position="45"/>
    </location>
</feature>
<feature type="glycosylation site" description="N-linked (GlcNAc...) asparagine" evidence="3">
    <location>
        <position position="211"/>
    </location>
</feature>
<feature type="disulfide bond" evidence="4">
    <location>
        <begin position="104"/>
        <end position="160"/>
    </location>
</feature>
<proteinExistence type="evidence at transcript level"/>
<gene>
    <name type="primary">Tmem81</name>
</gene>
<name>TMM81_RAT</name>
<reference key="1">
    <citation type="journal article" date="2004" name="Genome Res.">
        <title>The status, quality, and expansion of the NIH full-length cDNA project: the Mammalian Gene Collection (MGC).</title>
        <authorList>
            <consortium name="The MGC Project Team"/>
        </authorList>
    </citation>
    <scope>NUCLEOTIDE SEQUENCE [LARGE SCALE MRNA]</scope>
    <source>
        <tissue>Testis</tissue>
    </source>
</reference>
<dbReference type="EMBL" id="BC079284">
    <property type="protein sequence ID" value="AAH79284.1"/>
    <property type="molecule type" value="mRNA"/>
</dbReference>
<dbReference type="RefSeq" id="NP_001017490.1">
    <property type="nucleotide sequence ID" value="NM_001017490.1"/>
</dbReference>
<dbReference type="STRING" id="10116.ENSRNOP00000034105"/>
<dbReference type="GlyCosmos" id="Q6AXW8">
    <property type="glycosylation" value="2 sites, No reported glycans"/>
</dbReference>
<dbReference type="GlyGen" id="Q6AXW8">
    <property type="glycosylation" value="2 sites"/>
</dbReference>
<dbReference type="PhosphoSitePlus" id="Q6AXW8"/>
<dbReference type="PaxDb" id="10116-ENSRNOP00000034105"/>
<dbReference type="Ensembl" id="ENSRNOT00000035335.4">
    <property type="protein sequence ID" value="ENSRNOP00000034105.3"/>
    <property type="gene ID" value="ENSRNOG00000028752.4"/>
</dbReference>
<dbReference type="GeneID" id="498229"/>
<dbReference type="KEGG" id="rno:498229"/>
<dbReference type="UCSC" id="RGD:1561544">
    <property type="organism name" value="rat"/>
</dbReference>
<dbReference type="AGR" id="RGD:1561544"/>
<dbReference type="CTD" id="388730"/>
<dbReference type="RGD" id="1561544">
    <property type="gene designation" value="Tmem81"/>
</dbReference>
<dbReference type="eggNOG" id="ENOG502RYDZ">
    <property type="taxonomic scope" value="Eukaryota"/>
</dbReference>
<dbReference type="GeneTree" id="ENSGT00390000006349"/>
<dbReference type="HOGENOM" id="CLU_093881_0_0_1"/>
<dbReference type="InParanoid" id="Q6AXW8"/>
<dbReference type="OMA" id="ECLTNWL"/>
<dbReference type="OrthoDB" id="9390762at2759"/>
<dbReference type="PhylomeDB" id="Q6AXW8"/>
<dbReference type="TreeFam" id="TF333177"/>
<dbReference type="PRO" id="PR:Q6AXW8"/>
<dbReference type="Proteomes" id="UP000002494">
    <property type="component" value="Chromosome 13"/>
</dbReference>
<dbReference type="Bgee" id="ENSRNOG00000028752">
    <property type="expression patterns" value="Expressed in testis and 19 other cell types or tissues"/>
</dbReference>
<dbReference type="GO" id="GO:0005886">
    <property type="term" value="C:plasma membrane"/>
    <property type="evidence" value="ECO:0000266"/>
    <property type="project" value="RGD"/>
</dbReference>
<dbReference type="GO" id="GO:0030674">
    <property type="term" value="F:protein-macromolecule adaptor activity"/>
    <property type="evidence" value="ECO:0000266"/>
    <property type="project" value="RGD"/>
</dbReference>
<dbReference type="GO" id="GO:0035036">
    <property type="term" value="P:sperm-egg recognition"/>
    <property type="evidence" value="ECO:0000250"/>
    <property type="project" value="UniProtKB"/>
</dbReference>
<dbReference type="CDD" id="cd00096">
    <property type="entry name" value="Ig"/>
    <property type="match status" value="1"/>
</dbReference>
<dbReference type="InterPro" id="IPR007110">
    <property type="entry name" value="Ig-like_dom"/>
</dbReference>
<dbReference type="InterPro" id="IPR036179">
    <property type="entry name" value="Ig-like_dom_sf"/>
</dbReference>
<dbReference type="InterPro" id="IPR039293">
    <property type="entry name" value="TMEM81"/>
</dbReference>
<dbReference type="PANTHER" id="PTHR35670">
    <property type="entry name" value="TRANSMEMBRANE PROTEIN 81"/>
    <property type="match status" value="1"/>
</dbReference>
<dbReference type="PANTHER" id="PTHR35670:SF1">
    <property type="entry name" value="TRANSMEMBRANE PROTEIN 81"/>
    <property type="match status" value="1"/>
</dbReference>
<dbReference type="SUPFAM" id="SSF48726">
    <property type="entry name" value="Immunoglobulin"/>
    <property type="match status" value="1"/>
</dbReference>
<dbReference type="PROSITE" id="PS50835">
    <property type="entry name" value="IG_LIKE"/>
    <property type="match status" value="1"/>
</dbReference>
<accession>Q6AXW8</accession>
<protein>
    <recommendedName>
        <fullName>Transmembrane protein 81</fullName>
    </recommendedName>
</protein>
<evidence type="ECO:0000250" key="1">
    <source>
        <dbReference type="UniProtKB" id="B8JI67"/>
    </source>
</evidence>
<evidence type="ECO:0000250" key="2">
    <source>
        <dbReference type="UniProtKB" id="Q6P7N7"/>
    </source>
</evidence>
<evidence type="ECO:0000255" key="3"/>
<evidence type="ECO:0000255" key="4">
    <source>
        <dbReference type="PROSITE-ProRule" id="PRU00114"/>
    </source>
</evidence>
<comment type="function">
    <text evidence="2">Essential fertilization factor required for male fertility. Part of a conserved trimeric sperm complex with the essential fertilization factors IZUMO1 and SPACA6 which bridges sperm and oocyte membranes during fertilization by binding to IZUMO1R/JUNO on the oocyte.</text>
</comment>
<comment type="subunit">
    <text evidence="2">Forms a complex with IZUMO1 and SPACA6 on spermatocyte cell membrane required for fertilization.</text>
</comment>
<comment type="subcellular location">
    <subcellularLocation>
        <location evidence="1">Cell membrane</location>
        <topology evidence="3">Single-pass type I membrane protein</topology>
    </subcellularLocation>
</comment>
<sequence>MKAVATVFICGSLVLITYLPLVVTSPQTLAIPEKLRQAVGRVVVNATACSVTCGLGYKEETSCEVGPDGVRRDCRSQRLECLTNWICGMLHFTIIQRQQFELNCLSSDILTKGQEAFRFTWKLARGIISTNDELFKPFRANSPFLRFKPAYESDSGTYRCDVQQLKNLKLVKRLYFGLRVLPPKLVNLNFQQSLTEDQKLAEEGWEVHLDNQSQPHLPGWRKKVSLALGVGIAAGVVGGVLVNVALCRVLGGTGGNGNLSSL</sequence>
<organism>
    <name type="scientific">Rattus norvegicus</name>
    <name type="common">Rat</name>
    <dbReference type="NCBI Taxonomy" id="10116"/>
    <lineage>
        <taxon>Eukaryota</taxon>
        <taxon>Metazoa</taxon>
        <taxon>Chordata</taxon>
        <taxon>Craniata</taxon>
        <taxon>Vertebrata</taxon>
        <taxon>Euteleostomi</taxon>
        <taxon>Mammalia</taxon>
        <taxon>Eutheria</taxon>
        <taxon>Euarchontoglires</taxon>
        <taxon>Glires</taxon>
        <taxon>Rodentia</taxon>
        <taxon>Myomorpha</taxon>
        <taxon>Muroidea</taxon>
        <taxon>Muridae</taxon>
        <taxon>Murinae</taxon>
        <taxon>Rattus</taxon>
    </lineage>
</organism>
<keyword id="KW-1003">Cell membrane</keyword>
<keyword id="KW-1015">Disulfide bond</keyword>
<keyword id="KW-0325">Glycoprotein</keyword>
<keyword id="KW-0393">Immunoglobulin domain</keyword>
<keyword id="KW-0472">Membrane</keyword>
<keyword id="KW-1185">Reference proteome</keyword>
<keyword id="KW-0732">Signal</keyword>
<keyword id="KW-0812">Transmembrane</keyword>
<keyword id="KW-1133">Transmembrane helix</keyword>